<evidence type="ECO:0000255" key="1">
    <source>
        <dbReference type="HAMAP-Rule" id="MF_00111"/>
    </source>
</evidence>
<evidence type="ECO:0007829" key="2">
    <source>
        <dbReference type="PDB" id="5WI5"/>
    </source>
</evidence>
<evidence type="ECO:0007829" key="3">
    <source>
        <dbReference type="PDB" id="6NKJ"/>
    </source>
</evidence>
<feature type="chain" id="PRO_0000178930" description="UDP-N-acetylglucosamine 1-carboxyvinyltransferase 1">
    <location>
        <begin position="1"/>
        <end position="427"/>
    </location>
</feature>
<feature type="active site" description="Proton donor" evidence="1">
    <location>
        <position position="120"/>
    </location>
</feature>
<feature type="binding site" evidence="1">
    <location>
        <begin position="23"/>
        <end position="24"/>
    </location>
    <ligand>
        <name>phosphoenolpyruvate</name>
        <dbReference type="ChEBI" id="CHEBI:58702"/>
    </ligand>
</feature>
<feature type="binding site" evidence="1">
    <location>
        <position position="96"/>
    </location>
    <ligand>
        <name>UDP-N-acetyl-alpha-D-glucosamine</name>
        <dbReference type="ChEBI" id="CHEBI:57705"/>
    </ligand>
</feature>
<feature type="binding site" evidence="1">
    <location>
        <begin position="125"/>
        <end position="129"/>
    </location>
    <ligand>
        <name>UDP-N-acetyl-alpha-D-glucosamine</name>
        <dbReference type="ChEBI" id="CHEBI:57705"/>
    </ligand>
</feature>
<feature type="binding site" evidence="1">
    <location>
        <position position="309"/>
    </location>
    <ligand>
        <name>UDP-N-acetyl-alpha-D-glucosamine</name>
        <dbReference type="ChEBI" id="CHEBI:57705"/>
    </ligand>
</feature>
<feature type="binding site" evidence="1">
    <location>
        <position position="331"/>
    </location>
    <ligand>
        <name>UDP-N-acetyl-alpha-D-glucosamine</name>
        <dbReference type="ChEBI" id="CHEBI:57705"/>
    </ligand>
</feature>
<feature type="modified residue" description="2-(S-cysteinyl)pyruvic acid O-phosphothioketal" evidence="1">
    <location>
        <position position="120"/>
    </location>
</feature>
<feature type="strand" evidence="3">
    <location>
        <begin position="3"/>
        <end position="7"/>
    </location>
</feature>
<feature type="strand" evidence="3">
    <location>
        <begin position="14"/>
        <end position="17"/>
    </location>
</feature>
<feature type="helix" evidence="3">
    <location>
        <begin position="23"/>
        <end position="32"/>
    </location>
</feature>
<feature type="helix" evidence="3">
    <location>
        <begin position="33"/>
        <end position="35"/>
    </location>
</feature>
<feature type="strand" evidence="3">
    <location>
        <begin position="36"/>
        <end position="39"/>
    </location>
</feature>
<feature type="strand" evidence="3">
    <location>
        <begin position="41"/>
        <end position="45"/>
    </location>
</feature>
<feature type="helix" evidence="3">
    <location>
        <begin position="50"/>
        <end position="60"/>
    </location>
</feature>
<feature type="turn" evidence="3">
    <location>
        <begin position="61"/>
        <end position="63"/>
    </location>
</feature>
<feature type="strand" evidence="3">
    <location>
        <begin position="65"/>
        <end position="69"/>
    </location>
</feature>
<feature type="turn" evidence="3">
    <location>
        <begin position="70"/>
        <end position="73"/>
    </location>
</feature>
<feature type="strand" evidence="3">
    <location>
        <begin position="74"/>
        <end position="78"/>
    </location>
</feature>
<feature type="helix" evidence="3">
    <location>
        <begin position="89"/>
        <end position="92"/>
    </location>
</feature>
<feature type="helix" evidence="3">
    <location>
        <begin position="96"/>
        <end position="101"/>
    </location>
</feature>
<feature type="helix" evidence="3">
    <location>
        <begin position="102"/>
        <end position="109"/>
    </location>
</feature>
<feature type="strand" evidence="3">
    <location>
        <begin position="110"/>
        <end position="115"/>
    </location>
</feature>
<feature type="helix" evidence="3">
    <location>
        <begin position="128"/>
        <end position="136"/>
    </location>
</feature>
<feature type="strand" evidence="3">
    <location>
        <begin position="139"/>
        <end position="144"/>
    </location>
</feature>
<feature type="strand" evidence="3">
    <location>
        <begin position="147"/>
        <end position="154"/>
    </location>
</feature>
<feature type="strand" evidence="3">
    <location>
        <begin position="159"/>
        <end position="161"/>
    </location>
</feature>
<feature type="helix" evidence="3">
    <location>
        <begin position="167"/>
        <end position="177"/>
    </location>
</feature>
<feature type="strand" evidence="3">
    <location>
        <begin position="180"/>
        <end position="187"/>
    </location>
</feature>
<feature type="helix" evidence="3">
    <location>
        <begin position="193"/>
        <end position="204"/>
    </location>
</feature>
<feature type="strand" evidence="2">
    <location>
        <begin position="208"/>
        <end position="210"/>
    </location>
</feature>
<feature type="strand" evidence="3">
    <location>
        <begin position="214"/>
        <end position="220"/>
    </location>
</feature>
<feature type="strand" evidence="3">
    <location>
        <begin position="229"/>
        <end position="231"/>
    </location>
</feature>
<feature type="helix" evidence="3">
    <location>
        <begin position="236"/>
        <end position="248"/>
    </location>
</feature>
<feature type="strand" evidence="3">
    <location>
        <begin position="252"/>
        <end position="256"/>
    </location>
</feature>
<feature type="helix" evidence="3">
    <location>
        <begin position="260"/>
        <end position="273"/>
    </location>
</feature>
<feature type="strand" evidence="3">
    <location>
        <begin position="276"/>
        <end position="280"/>
    </location>
</feature>
<feature type="strand" evidence="3">
    <location>
        <begin position="283"/>
        <end position="287"/>
    </location>
</feature>
<feature type="helix" evidence="3">
    <location>
        <begin position="290"/>
        <end position="292"/>
    </location>
</feature>
<feature type="strand" evidence="3">
    <location>
        <begin position="297"/>
        <end position="300"/>
    </location>
</feature>
<feature type="helix" evidence="3">
    <location>
        <begin position="308"/>
        <end position="310"/>
    </location>
</feature>
<feature type="helix" evidence="3">
    <location>
        <begin position="311"/>
        <end position="318"/>
    </location>
</feature>
<feature type="strand" evidence="3">
    <location>
        <begin position="321"/>
        <end position="328"/>
    </location>
</feature>
<feature type="helix" evidence="3">
    <location>
        <begin position="337"/>
        <end position="342"/>
    </location>
</feature>
<feature type="helix" evidence="3">
    <location>
        <begin position="343"/>
        <end position="345"/>
    </location>
</feature>
<feature type="strand" evidence="3">
    <location>
        <begin position="350"/>
        <end position="352"/>
    </location>
</feature>
<feature type="strand" evidence="3">
    <location>
        <begin position="355"/>
        <end position="359"/>
    </location>
</feature>
<feature type="strand" evidence="3">
    <location>
        <begin position="368"/>
        <end position="370"/>
    </location>
</feature>
<feature type="helix" evidence="3">
    <location>
        <begin position="374"/>
        <end position="386"/>
    </location>
</feature>
<feature type="strand" evidence="3">
    <location>
        <begin position="387"/>
        <end position="394"/>
    </location>
</feature>
<feature type="turn" evidence="3">
    <location>
        <begin position="396"/>
        <end position="398"/>
    </location>
</feature>
<feature type="helix" evidence="3">
    <location>
        <begin position="399"/>
        <end position="401"/>
    </location>
</feature>
<feature type="helix" evidence="3">
    <location>
        <begin position="406"/>
        <end position="412"/>
    </location>
</feature>
<feature type="strand" evidence="3">
    <location>
        <begin position="417"/>
        <end position="420"/>
    </location>
</feature>
<accession>Q97NQ4</accession>
<proteinExistence type="evidence at protein level"/>
<comment type="function">
    <text evidence="1">Cell wall formation. Adds enolpyruvyl to UDP-N-acetylglucosamine.</text>
</comment>
<comment type="catalytic activity">
    <reaction evidence="1">
        <text>phosphoenolpyruvate + UDP-N-acetyl-alpha-D-glucosamine = UDP-N-acetyl-3-O-(1-carboxyvinyl)-alpha-D-glucosamine + phosphate</text>
        <dbReference type="Rhea" id="RHEA:18681"/>
        <dbReference type="ChEBI" id="CHEBI:43474"/>
        <dbReference type="ChEBI" id="CHEBI:57705"/>
        <dbReference type="ChEBI" id="CHEBI:58702"/>
        <dbReference type="ChEBI" id="CHEBI:68483"/>
        <dbReference type="EC" id="2.5.1.7"/>
    </reaction>
</comment>
<comment type="pathway">
    <text evidence="1">Cell wall biogenesis; peptidoglycan biosynthesis.</text>
</comment>
<comment type="subcellular location">
    <subcellularLocation>
        <location evidence="1">Cytoplasm</location>
    </subcellularLocation>
</comment>
<comment type="similarity">
    <text evidence="1">Belongs to the EPSP synthase family. MurA subfamily.</text>
</comment>
<gene>
    <name evidence="1" type="primary">murA1</name>
    <name type="synonym">murA</name>
    <name type="ordered locus">SP_1966</name>
</gene>
<dbReference type="EC" id="2.5.1.7" evidence="1"/>
<dbReference type="EMBL" id="AE005672">
    <property type="protein sequence ID" value="AAK76033.1"/>
    <property type="molecule type" value="Genomic_DNA"/>
</dbReference>
<dbReference type="PIR" id="H95229">
    <property type="entry name" value="H95229"/>
</dbReference>
<dbReference type="RefSeq" id="WP_000358028.1">
    <property type="nucleotide sequence ID" value="NZ_CP155539.1"/>
</dbReference>
<dbReference type="PDB" id="5WI5">
    <property type="method" value="X-ray"/>
    <property type="resolution" value="2.00 A"/>
    <property type="chains" value="A/B/C/D=1-427"/>
</dbReference>
<dbReference type="PDB" id="6NKJ">
    <property type="method" value="X-ray"/>
    <property type="resolution" value="1.30 A"/>
    <property type="chains" value="A/B=1-427"/>
</dbReference>
<dbReference type="PDBsum" id="5WI5"/>
<dbReference type="PDBsum" id="6NKJ"/>
<dbReference type="SMR" id="Q97NQ4"/>
<dbReference type="PaxDb" id="170187-SP_1966"/>
<dbReference type="EnsemblBacteria" id="AAK76033">
    <property type="protein sequence ID" value="AAK76033"/>
    <property type="gene ID" value="SP_1966"/>
</dbReference>
<dbReference type="GeneID" id="45652821"/>
<dbReference type="KEGG" id="spn:SP_1966"/>
<dbReference type="eggNOG" id="COG0766">
    <property type="taxonomic scope" value="Bacteria"/>
</dbReference>
<dbReference type="PhylomeDB" id="Q97NQ4"/>
<dbReference type="BioCyc" id="SPNE170187:G1FZB-2020-MONOMER"/>
<dbReference type="UniPathway" id="UPA00219"/>
<dbReference type="Proteomes" id="UP000000585">
    <property type="component" value="Chromosome"/>
</dbReference>
<dbReference type="GO" id="GO:0005737">
    <property type="term" value="C:cytoplasm"/>
    <property type="evidence" value="ECO:0007669"/>
    <property type="project" value="UniProtKB-SubCell"/>
</dbReference>
<dbReference type="GO" id="GO:0008760">
    <property type="term" value="F:UDP-N-acetylglucosamine 1-carboxyvinyltransferase activity"/>
    <property type="evidence" value="ECO:0007669"/>
    <property type="project" value="UniProtKB-UniRule"/>
</dbReference>
<dbReference type="GO" id="GO:0051301">
    <property type="term" value="P:cell division"/>
    <property type="evidence" value="ECO:0007669"/>
    <property type="project" value="UniProtKB-KW"/>
</dbReference>
<dbReference type="GO" id="GO:0071555">
    <property type="term" value="P:cell wall organization"/>
    <property type="evidence" value="ECO:0007669"/>
    <property type="project" value="UniProtKB-KW"/>
</dbReference>
<dbReference type="GO" id="GO:0009252">
    <property type="term" value="P:peptidoglycan biosynthetic process"/>
    <property type="evidence" value="ECO:0007669"/>
    <property type="project" value="UniProtKB-UniRule"/>
</dbReference>
<dbReference type="GO" id="GO:0008360">
    <property type="term" value="P:regulation of cell shape"/>
    <property type="evidence" value="ECO:0007669"/>
    <property type="project" value="UniProtKB-KW"/>
</dbReference>
<dbReference type="GO" id="GO:0019277">
    <property type="term" value="P:UDP-N-acetylgalactosamine biosynthetic process"/>
    <property type="evidence" value="ECO:0007669"/>
    <property type="project" value="InterPro"/>
</dbReference>
<dbReference type="CDD" id="cd01555">
    <property type="entry name" value="UdpNAET"/>
    <property type="match status" value="1"/>
</dbReference>
<dbReference type="FunFam" id="3.65.10.10:FF:000001">
    <property type="entry name" value="UDP-N-acetylglucosamine 1-carboxyvinyltransferase"/>
    <property type="match status" value="1"/>
</dbReference>
<dbReference type="Gene3D" id="3.65.10.10">
    <property type="entry name" value="Enolpyruvate transferase domain"/>
    <property type="match status" value="2"/>
</dbReference>
<dbReference type="HAMAP" id="MF_00111">
    <property type="entry name" value="MurA"/>
    <property type="match status" value="1"/>
</dbReference>
<dbReference type="InterPro" id="IPR001986">
    <property type="entry name" value="Enolpyruvate_Tfrase_dom"/>
</dbReference>
<dbReference type="InterPro" id="IPR036968">
    <property type="entry name" value="Enolpyruvate_Tfrase_sf"/>
</dbReference>
<dbReference type="InterPro" id="IPR050068">
    <property type="entry name" value="MurA_subfamily"/>
</dbReference>
<dbReference type="InterPro" id="IPR013792">
    <property type="entry name" value="RNA3'P_cycl/enolpyr_Trfase_a/b"/>
</dbReference>
<dbReference type="InterPro" id="IPR005750">
    <property type="entry name" value="UDP_GlcNAc_COvinyl_MurA"/>
</dbReference>
<dbReference type="NCBIfam" id="TIGR01072">
    <property type="entry name" value="murA"/>
    <property type="match status" value="1"/>
</dbReference>
<dbReference type="NCBIfam" id="NF006873">
    <property type="entry name" value="PRK09369.1"/>
    <property type="match status" value="1"/>
</dbReference>
<dbReference type="PANTHER" id="PTHR43783">
    <property type="entry name" value="UDP-N-ACETYLGLUCOSAMINE 1-CARBOXYVINYLTRANSFERASE"/>
    <property type="match status" value="1"/>
</dbReference>
<dbReference type="PANTHER" id="PTHR43783:SF1">
    <property type="entry name" value="UDP-N-ACETYLGLUCOSAMINE 1-CARBOXYVINYLTRANSFERASE"/>
    <property type="match status" value="1"/>
</dbReference>
<dbReference type="Pfam" id="PF00275">
    <property type="entry name" value="EPSP_synthase"/>
    <property type="match status" value="1"/>
</dbReference>
<dbReference type="SUPFAM" id="SSF55205">
    <property type="entry name" value="EPT/RTPC-like"/>
    <property type="match status" value="1"/>
</dbReference>
<name>MURA1_STRPN</name>
<protein>
    <recommendedName>
        <fullName evidence="1">UDP-N-acetylglucosamine 1-carboxyvinyltransferase 1</fullName>
        <ecNumber evidence="1">2.5.1.7</ecNumber>
    </recommendedName>
    <alternativeName>
        <fullName evidence="1">Enoylpyruvate transferase 1</fullName>
    </alternativeName>
    <alternativeName>
        <fullName evidence="1">UDP-N-acetylglucosamine enolpyruvyl transferase 1</fullName>
        <shortName evidence="1">EPT 1</shortName>
    </alternativeName>
</protein>
<keyword id="KW-0002">3D-structure</keyword>
<keyword id="KW-0131">Cell cycle</keyword>
<keyword id="KW-0132">Cell division</keyword>
<keyword id="KW-0133">Cell shape</keyword>
<keyword id="KW-0961">Cell wall biogenesis/degradation</keyword>
<keyword id="KW-0963">Cytoplasm</keyword>
<keyword id="KW-0573">Peptidoglycan synthesis</keyword>
<keyword id="KW-0670">Pyruvate</keyword>
<keyword id="KW-1185">Reference proteome</keyword>
<keyword id="KW-0808">Transferase</keyword>
<sequence>MDKIVVQGGDNRLVGSVTIEGAKNAVLPLLAATILASEGKTVLQNVPILSDVFIMNQVVGGLNAKVDFDEEAHLVKVDATGDITEEAPYKYVSKMRASIVVLGPILARVGHAKVSMPGGCTIGSRPIDLHLKGLEAMGVKISQTAGYIEAKAERLHGAHIYMDFPSVGATQNLMMAATLADGVTVIENAAREPEIVDLAILLNEMGAKVKGAGTETITITGVEKLHGTTHNVVQDRIEAGTFMVAAAMTGGDVLIRDAVWEHNRPLIAKLLEMGVEVIEEDEGIRVRSQLENLKAVHVKTLPHPGFPTDMQAQFTALMTVAKGESTMVETVFENRFQHLEEMRRMGLHSEIIRDTARIVGGQPLQGAEVLSTDLRASAALILTGLVAQGETVVGKLVHLDRGYYGFHEKLAQLGAKIQRIEASDEDE</sequence>
<reference key="1">
    <citation type="journal article" date="2001" name="Science">
        <title>Complete genome sequence of a virulent isolate of Streptococcus pneumoniae.</title>
        <authorList>
            <person name="Tettelin H."/>
            <person name="Nelson K.E."/>
            <person name="Paulsen I.T."/>
            <person name="Eisen J.A."/>
            <person name="Read T.D."/>
            <person name="Peterson S.N."/>
            <person name="Heidelberg J.F."/>
            <person name="DeBoy R.T."/>
            <person name="Haft D.H."/>
            <person name="Dodson R.J."/>
            <person name="Durkin A.S."/>
            <person name="Gwinn M.L."/>
            <person name="Kolonay J.F."/>
            <person name="Nelson W.C."/>
            <person name="Peterson J.D."/>
            <person name="Umayam L.A."/>
            <person name="White O."/>
            <person name="Salzberg S.L."/>
            <person name="Lewis M.R."/>
            <person name="Radune D."/>
            <person name="Holtzapple E.K."/>
            <person name="Khouri H.M."/>
            <person name="Wolf A.M."/>
            <person name="Utterback T.R."/>
            <person name="Hansen C.L."/>
            <person name="McDonald L.A."/>
            <person name="Feldblyum T.V."/>
            <person name="Angiuoli S.V."/>
            <person name="Dickinson T."/>
            <person name="Hickey E.K."/>
            <person name="Holt I.E."/>
            <person name="Loftus B.J."/>
            <person name="Yang F."/>
            <person name="Smith H.O."/>
            <person name="Venter J.C."/>
            <person name="Dougherty B.A."/>
            <person name="Morrison D.A."/>
            <person name="Hollingshead S.K."/>
            <person name="Fraser C.M."/>
        </authorList>
    </citation>
    <scope>NUCLEOTIDE SEQUENCE [LARGE SCALE GENOMIC DNA]</scope>
    <source>
        <strain>ATCC BAA-334 / TIGR4</strain>
    </source>
</reference>
<organism>
    <name type="scientific">Streptococcus pneumoniae serotype 4 (strain ATCC BAA-334 / TIGR4)</name>
    <dbReference type="NCBI Taxonomy" id="170187"/>
    <lineage>
        <taxon>Bacteria</taxon>
        <taxon>Bacillati</taxon>
        <taxon>Bacillota</taxon>
        <taxon>Bacilli</taxon>
        <taxon>Lactobacillales</taxon>
        <taxon>Streptococcaceae</taxon>
        <taxon>Streptococcus</taxon>
    </lineage>
</organism>